<accession>A1U2U4</accession>
<feature type="chain" id="PRO_1000025564" description="Phosphoenolpyruvate carboxylase">
    <location>
        <begin position="1"/>
        <end position="881"/>
    </location>
</feature>
<feature type="active site" evidence="1">
    <location>
        <position position="139"/>
    </location>
</feature>
<feature type="active site" evidence="1">
    <location>
        <position position="544"/>
    </location>
</feature>
<comment type="function">
    <text evidence="1">Forms oxaloacetate, a four-carbon dicarboxylic acid source for the tricarboxylic acid cycle.</text>
</comment>
<comment type="catalytic activity">
    <reaction evidence="1">
        <text>oxaloacetate + phosphate = phosphoenolpyruvate + hydrogencarbonate</text>
        <dbReference type="Rhea" id="RHEA:28370"/>
        <dbReference type="ChEBI" id="CHEBI:16452"/>
        <dbReference type="ChEBI" id="CHEBI:17544"/>
        <dbReference type="ChEBI" id="CHEBI:43474"/>
        <dbReference type="ChEBI" id="CHEBI:58702"/>
        <dbReference type="EC" id="4.1.1.31"/>
    </reaction>
</comment>
<comment type="cofactor">
    <cofactor evidence="1">
        <name>Mg(2+)</name>
        <dbReference type="ChEBI" id="CHEBI:18420"/>
    </cofactor>
</comment>
<comment type="similarity">
    <text evidence="1">Belongs to the PEPCase type 1 family.</text>
</comment>
<dbReference type="EC" id="4.1.1.31" evidence="1"/>
<dbReference type="EMBL" id="CP000514">
    <property type="protein sequence ID" value="ABM19313.1"/>
    <property type="molecule type" value="Genomic_DNA"/>
</dbReference>
<dbReference type="RefSeq" id="WP_011785701.1">
    <property type="nucleotide sequence ID" value="NC_008740.1"/>
</dbReference>
<dbReference type="SMR" id="A1U2U4"/>
<dbReference type="STRING" id="351348.Maqu_2234"/>
<dbReference type="KEGG" id="maq:Maqu_2234"/>
<dbReference type="eggNOG" id="COG2352">
    <property type="taxonomic scope" value="Bacteria"/>
</dbReference>
<dbReference type="HOGENOM" id="CLU_006557_2_0_6"/>
<dbReference type="OrthoDB" id="9768133at2"/>
<dbReference type="Proteomes" id="UP000000998">
    <property type="component" value="Chromosome"/>
</dbReference>
<dbReference type="GO" id="GO:0005829">
    <property type="term" value="C:cytosol"/>
    <property type="evidence" value="ECO:0007669"/>
    <property type="project" value="TreeGrafter"/>
</dbReference>
<dbReference type="GO" id="GO:0000287">
    <property type="term" value="F:magnesium ion binding"/>
    <property type="evidence" value="ECO:0007669"/>
    <property type="project" value="UniProtKB-UniRule"/>
</dbReference>
<dbReference type="GO" id="GO:0008964">
    <property type="term" value="F:phosphoenolpyruvate carboxylase activity"/>
    <property type="evidence" value="ECO:0007669"/>
    <property type="project" value="UniProtKB-UniRule"/>
</dbReference>
<dbReference type="GO" id="GO:0015977">
    <property type="term" value="P:carbon fixation"/>
    <property type="evidence" value="ECO:0007669"/>
    <property type="project" value="UniProtKB-UniRule"/>
</dbReference>
<dbReference type="GO" id="GO:0006107">
    <property type="term" value="P:oxaloacetate metabolic process"/>
    <property type="evidence" value="ECO:0007669"/>
    <property type="project" value="UniProtKB-UniRule"/>
</dbReference>
<dbReference type="GO" id="GO:0006099">
    <property type="term" value="P:tricarboxylic acid cycle"/>
    <property type="evidence" value="ECO:0007669"/>
    <property type="project" value="InterPro"/>
</dbReference>
<dbReference type="Gene3D" id="1.20.1440.90">
    <property type="entry name" value="Phosphoenolpyruvate/pyruvate domain"/>
    <property type="match status" value="1"/>
</dbReference>
<dbReference type="HAMAP" id="MF_00595">
    <property type="entry name" value="PEPcase_type1"/>
    <property type="match status" value="1"/>
</dbReference>
<dbReference type="InterPro" id="IPR021135">
    <property type="entry name" value="PEP_COase"/>
</dbReference>
<dbReference type="InterPro" id="IPR022805">
    <property type="entry name" value="PEP_COase_bac/pln-type"/>
</dbReference>
<dbReference type="InterPro" id="IPR018129">
    <property type="entry name" value="PEP_COase_Lys_AS"/>
</dbReference>
<dbReference type="InterPro" id="IPR033129">
    <property type="entry name" value="PEPCASE_His_AS"/>
</dbReference>
<dbReference type="InterPro" id="IPR015813">
    <property type="entry name" value="Pyrv/PenolPyrv_kinase-like_dom"/>
</dbReference>
<dbReference type="NCBIfam" id="NF000584">
    <property type="entry name" value="PRK00009.1"/>
    <property type="match status" value="1"/>
</dbReference>
<dbReference type="PANTHER" id="PTHR30523">
    <property type="entry name" value="PHOSPHOENOLPYRUVATE CARBOXYLASE"/>
    <property type="match status" value="1"/>
</dbReference>
<dbReference type="PANTHER" id="PTHR30523:SF6">
    <property type="entry name" value="PHOSPHOENOLPYRUVATE CARBOXYLASE"/>
    <property type="match status" value="1"/>
</dbReference>
<dbReference type="Pfam" id="PF00311">
    <property type="entry name" value="PEPcase"/>
    <property type="match status" value="1"/>
</dbReference>
<dbReference type="PRINTS" id="PR00150">
    <property type="entry name" value="PEPCARBXLASE"/>
</dbReference>
<dbReference type="SUPFAM" id="SSF51621">
    <property type="entry name" value="Phosphoenolpyruvate/pyruvate domain"/>
    <property type="match status" value="1"/>
</dbReference>
<dbReference type="PROSITE" id="PS00781">
    <property type="entry name" value="PEPCASE_1"/>
    <property type="match status" value="1"/>
</dbReference>
<dbReference type="PROSITE" id="PS00393">
    <property type="entry name" value="PEPCASE_2"/>
    <property type="match status" value="1"/>
</dbReference>
<evidence type="ECO:0000255" key="1">
    <source>
        <dbReference type="HAMAP-Rule" id="MF_00595"/>
    </source>
</evidence>
<keyword id="KW-0120">Carbon dioxide fixation</keyword>
<keyword id="KW-0456">Lyase</keyword>
<keyword id="KW-0460">Magnesium</keyword>
<gene>
    <name evidence="1" type="primary">ppc</name>
    <name type="ordered locus">Maqu_2234</name>
</gene>
<reference key="1">
    <citation type="journal article" date="2011" name="Appl. Environ. Microbiol.">
        <title>Genomic potential of Marinobacter aquaeolei, a biogeochemical 'opportunitroph'.</title>
        <authorList>
            <person name="Singer E."/>
            <person name="Webb E.A."/>
            <person name="Nelson W.C."/>
            <person name="Heidelberg J.F."/>
            <person name="Ivanova N."/>
            <person name="Pati A."/>
            <person name="Edwards K.J."/>
        </authorList>
    </citation>
    <scope>NUCLEOTIDE SEQUENCE [LARGE SCALE GENOMIC DNA]</scope>
    <source>
        <strain>ATCC 700491 / DSM 11845 / VT8</strain>
    </source>
</reference>
<protein>
    <recommendedName>
        <fullName evidence="1">Phosphoenolpyruvate carboxylase</fullName>
        <shortName evidence="1">PEPC</shortName>
        <shortName evidence="1">PEPCase</shortName>
        <ecNumber evidence="1">4.1.1.31</ecNumber>
    </recommendedName>
</protein>
<organism>
    <name type="scientific">Marinobacter nauticus (strain ATCC 700491 / DSM 11845 / VT8)</name>
    <name type="common">Marinobacter aquaeolei</name>
    <dbReference type="NCBI Taxonomy" id="351348"/>
    <lineage>
        <taxon>Bacteria</taxon>
        <taxon>Pseudomonadati</taxon>
        <taxon>Pseudomonadota</taxon>
        <taxon>Gammaproteobacteria</taxon>
        <taxon>Pseudomonadales</taxon>
        <taxon>Marinobacteraceae</taxon>
        <taxon>Marinobacter</taxon>
    </lineage>
</organism>
<proteinExistence type="inferred from homology"/>
<name>CAPP_MARN8</name>
<sequence>MTELHPDLRENVRLLGDLLGQSILRFPGQDCYDRIEEIRAAAKADRRQESGSGQRLVKLLGQLSDDELLPVTRAFNQFLNLANLAEQYHGIRRKQGHPSDLMVESLGEVFDRLKSGGIDPQELHRKVADLRIEFVLTAHPTEVARRTLILKYDEMSDCLSRLDHDDLMPGEREEIVDRLSLLIAEAWHTDEIRHERPTAVDEAKWGFAVIENSLWQALPKFLRSLDTSLSEATGQGLPLQVSPIRIASWMGGDRDGNPNVTHEVTREVFLLGRWMAADLYLRDIQALRAELSMWQASDELRAEVGDSREPYRQVLAQLRERLIKTREWAEASVKGEPADDSGILFENEDLTGPLELCYRSLMECGLETIANGPLLDTIRRAHTFGLPLIRLDIRQEASRHAEAVAEMVNYLGLGDYLSWSEQERQAFLVKELKGRRPLVPRNWQPSEPVREVLATCEVVAGQTPEALGSYVISMASKPSDVLNVILLLREAGMAFPMRVVPLFETLDDLKGAPDSMAALYEVDWYREYCSGRQEVMIGYSDSSKDAGQLMAAWAQYQAQEKLTEVANRYGVHLTLFHGRGGTVGRGGGPANRAILSQPPGSVNGSFRITEQGEMIRFKFGLPRLAVQSLTLYTTAVIEATLAPPPVPKDEWREVMDWLTERSLRSYREVVRENPDFVPYFRQVTPETALGKLALGSRPARRKATGGVESLRAIPWIFAWTQMRLMLPSWLGSDVALEQAAQADRLPELREMMQGWPFFRTYVDMLEMVLAKADLRIASYYEQTLVEDEHLLALGQSLRQRLQGCIERLLELKQQQTLLEQEPVFAHSMKVRNPYTDPLHYLQAELLRRDRESEGAGKVPELVERALKVTMAGISAGMRNTG</sequence>